<dbReference type="EC" id="2.3.1.251" evidence="1"/>
<dbReference type="EMBL" id="CP000826">
    <property type="protein sequence ID" value="ABV40097.1"/>
    <property type="molecule type" value="Genomic_DNA"/>
</dbReference>
<dbReference type="SMR" id="A8GAF7"/>
<dbReference type="STRING" id="399741.Spro_0993"/>
<dbReference type="KEGG" id="spe:Spro_0993"/>
<dbReference type="eggNOG" id="ENOG502Z7SY">
    <property type="taxonomic scope" value="Bacteria"/>
</dbReference>
<dbReference type="HOGENOM" id="CLU_104099_0_0_6"/>
<dbReference type="OrthoDB" id="9156803at2"/>
<dbReference type="GO" id="GO:0009279">
    <property type="term" value="C:cell outer membrane"/>
    <property type="evidence" value="ECO:0007669"/>
    <property type="project" value="UniProtKB-SubCell"/>
</dbReference>
<dbReference type="GO" id="GO:0016746">
    <property type="term" value="F:acyltransferase activity"/>
    <property type="evidence" value="ECO:0007669"/>
    <property type="project" value="UniProtKB-UniRule"/>
</dbReference>
<dbReference type="GO" id="GO:0009245">
    <property type="term" value="P:lipid A biosynthetic process"/>
    <property type="evidence" value="ECO:0007669"/>
    <property type="project" value="UniProtKB-UniRule"/>
</dbReference>
<dbReference type="FunFam" id="2.40.160.20:FF:000002">
    <property type="entry name" value="Lipid A palmitoyltransferase PagP"/>
    <property type="match status" value="1"/>
</dbReference>
<dbReference type="Gene3D" id="2.40.160.20">
    <property type="match status" value="1"/>
</dbReference>
<dbReference type="HAMAP" id="MF_00837">
    <property type="entry name" value="PagP_transferase"/>
    <property type="match status" value="1"/>
</dbReference>
<dbReference type="InterPro" id="IPR009746">
    <property type="entry name" value="LipidA_acyl_PagP"/>
</dbReference>
<dbReference type="InterPro" id="IPR011250">
    <property type="entry name" value="OMP/PagP_b-brl"/>
</dbReference>
<dbReference type="NCBIfam" id="NF008271">
    <property type="entry name" value="PRK11045.1"/>
    <property type="match status" value="1"/>
</dbReference>
<dbReference type="Pfam" id="PF07017">
    <property type="entry name" value="PagP"/>
    <property type="match status" value="1"/>
</dbReference>
<dbReference type="SUPFAM" id="SSF56925">
    <property type="entry name" value="OMPA-like"/>
    <property type="match status" value="1"/>
</dbReference>
<evidence type="ECO:0000255" key="1">
    <source>
        <dbReference type="HAMAP-Rule" id="MF_00837"/>
    </source>
</evidence>
<protein>
    <recommendedName>
        <fullName evidence="1">Lipid A acyltransferase PagP</fullName>
        <ecNumber evidence="1">2.3.1.251</ecNumber>
    </recommendedName>
    <alternativeName>
        <fullName evidence="1">Lipid A acylation protein</fullName>
    </alternativeName>
</protein>
<comment type="function">
    <text evidence="1">Transfers a fatty acid residue from the sn-1 position of a phospholipid to the N-linked hydroxyfatty acid chain on the proximal unit of lipid A or its precursors.</text>
</comment>
<comment type="catalytic activity">
    <reaction evidence="1">
        <text>a lipid A + a 1,2-diacyl-sn-glycero-3-phosphocholine = a hepta-acyl lipid A + a 2-acyl-sn-glycero-3-phosphocholine</text>
        <dbReference type="Rhea" id="RHEA:74275"/>
        <dbReference type="ChEBI" id="CHEBI:57643"/>
        <dbReference type="ChEBI" id="CHEBI:57875"/>
        <dbReference type="ChEBI" id="CHEBI:193141"/>
        <dbReference type="ChEBI" id="CHEBI:193142"/>
        <dbReference type="EC" id="2.3.1.251"/>
    </reaction>
</comment>
<comment type="catalytic activity">
    <reaction evidence="1">
        <text>a lipid IVA + a 1,2-diacyl-sn-glycero-3-phosphocholine = a lipid IVB + a 2-acyl-sn-glycero-3-phosphocholine</text>
        <dbReference type="Rhea" id="RHEA:74279"/>
        <dbReference type="ChEBI" id="CHEBI:57643"/>
        <dbReference type="ChEBI" id="CHEBI:57875"/>
        <dbReference type="ChEBI" id="CHEBI:176425"/>
        <dbReference type="ChEBI" id="CHEBI:193143"/>
        <dbReference type="EC" id="2.3.1.251"/>
    </reaction>
</comment>
<comment type="catalytic activity">
    <reaction evidence="1">
        <text>a lipid IIA + a 1,2-diacyl-sn-glycero-3-phosphocholine = a lipid IIB + a 2-acyl-sn-glycero-3-phosphocholine</text>
        <dbReference type="Rhea" id="RHEA:74283"/>
        <dbReference type="ChEBI" id="CHEBI:57643"/>
        <dbReference type="ChEBI" id="CHEBI:57875"/>
        <dbReference type="ChEBI" id="CHEBI:193144"/>
        <dbReference type="ChEBI" id="CHEBI:193145"/>
        <dbReference type="EC" id="2.3.1.251"/>
    </reaction>
</comment>
<comment type="subunit">
    <text evidence="1">Homodimer.</text>
</comment>
<comment type="subcellular location">
    <subcellularLocation>
        <location evidence="1">Cell outer membrane</location>
    </subcellularLocation>
</comment>
<comment type="similarity">
    <text evidence="1">Belongs to the lipid A palmitoyltransferase family.</text>
</comment>
<organism>
    <name type="scientific">Serratia proteamaculans (strain 568)</name>
    <dbReference type="NCBI Taxonomy" id="399741"/>
    <lineage>
        <taxon>Bacteria</taxon>
        <taxon>Pseudomonadati</taxon>
        <taxon>Pseudomonadota</taxon>
        <taxon>Gammaproteobacteria</taxon>
        <taxon>Enterobacterales</taxon>
        <taxon>Yersiniaceae</taxon>
        <taxon>Serratia</taxon>
    </lineage>
</organism>
<sequence>MMFFKRTILACTVALLFPALPSYAEVGAENGNSAQAEKPGLWKRFTSNVAETWNNSPNKDLYVPAITWHNRLTYSQEKIDSYNERPWGGGYGISRYDSDGDWHGLYMMVFKDSFNKWEPIGGYAYEKIWRPLEDKDFRLGLGFTASITARDNWNYIPIPAPLPLASIGYKQLTFQATYIPGTYNNGNVFFGWFRWQF</sequence>
<accession>A8GAF7</accession>
<name>PAGP_SERP5</name>
<reference key="1">
    <citation type="submission" date="2007-09" db="EMBL/GenBank/DDBJ databases">
        <title>Complete sequence of chromosome of Serratia proteamaculans 568.</title>
        <authorList>
            <consortium name="US DOE Joint Genome Institute"/>
            <person name="Copeland A."/>
            <person name="Lucas S."/>
            <person name="Lapidus A."/>
            <person name="Barry K."/>
            <person name="Glavina del Rio T."/>
            <person name="Dalin E."/>
            <person name="Tice H."/>
            <person name="Pitluck S."/>
            <person name="Chain P."/>
            <person name="Malfatti S."/>
            <person name="Shin M."/>
            <person name="Vergez L."/>
            <person name="Schmutz J."/>
            <person name="Larimer F."/>
            <person name="Land M."/>
            <person name="Hauser L."/>
            <person name="Kyrpides N."/>
            <person name="Kim E."/>
            <person name="Taghavi S."/>
            <person name="Newman L."/>
            <person name="Vangronsveld J."/>
            <person name="van der Lelie D."/>
            <person name="Richardson P."/>
        </authorList>
    </citation>
    <scope>NUCLEOTIDE SEQUENCE [LARGE SCALE GENOMIC DNA]</scope>
    <source>
        <strain>568</strain>
    </source>
</reference>
<feature type="signal peptide" evidence="1">
    <location>
        <begin position="1"/>
        <end position="24"/>
    </location>
</feature>
<feature type="chain" id="PRO_5000279090" description="Lipid A acyltransferase PagP">
    <location>
        <begin position="25"/>
        <end position="197"/>
    </location>
</feature>
<feature type="active site" evidence="1">
    <location>
        <position position="69"/>
    </location>
</feature>
<feature type="active site" evidence="1">
    <location>
        <position position="112"/>
    </location>
</feature>
<feature type="active site" evidence="1">
    <location>
        <position position="113"/>
    </location>
</feature>
<feature type="site" description="Role in lipopolysaccharide recognition" evidence="1">
    <location>
        <position position="78"/>
    </location>
</feature>
<feature type="site" description="Role in the phospholipid gating" evidence="1">
    <location>
        <position position="183"/>
    </location>
</feature>
<proteinExistence type="inferred from homology"/>
<keyword id="KW-0012">Acyltransferase</keyword>
<keyword id="KW-0998">Cell outer membrane</keyword>
<keyword id="KW-0472">Membrane</keyword>
<keyword id="KW-0732">Signal</keyword>
<keyword id="KW-0808">Transferase</keyword>
<gene>
    <name evidence="1" type="primary">pagP</name>
    <name type="ordered locus">Spro_0993</name>
</gene>